<reference key="1">
    <citation type="journal article" date="2003" name="Nature">
        <title>Genome divergence in two Prochlorococcus ecotypes reflects oceanic niche differentiation.</title>
        <authorList>
            <person name="Rocap G."/>
            <person name="Larimer F.W."/>
            <person name="Lamerdin J.E."/>
            <person name="Malfatti S."/>
            <person name="Chain P."/>
            <person name="Ahlgren N.A."/>
            <person name="Arellano A."/>
            <person name="Coleman M."/>
            <person name="Hauser L."/>
            <person name="Hess W.R."/>
            <person name="Johnson Z.I."/>
            <person name="Land M.L."/>
            <person name="Lindell D."/>
            <person name="Post A.F."/>
            <person name="Regala W."/>
            <person name="Shah M."/>
            <person name="Shaw S.L."/>
            <person name="Steglich C."/>
            <person name="Sullivan M.B."/>
            <person name="Ting C.S."/>
            <person name="Tolonen A."/>
            <person name="Webb E.A."/>
            <person name="Zinser E.R."/>
            <person name="Chisholm S.W."/>
        </authorList>
    </citation>
    <scope>NUCLEOTIDE SEQUENCE [LARGE SCALE GENOMIC DNA]</scope>
    <source>
        <strain>MIT 9313</strain>
    </source>
</reference>
<accession>Q7TV34</accession>
<organism>
    <name type="scientific">Prochlorococcus marinus (strain MIT 9313)</name>
    <dbReference type="NCBI Taxonomy" id="74547"/>
    <lineage>
        <taxon>Bacteria</taxon>
        <taxon>Bacillati</taxon>
        <taxon>Cyanobacteriota</taxon>
        <taxon>Cyanophyceae</taxon>
        <taxon>Synechococcales</taxon>
        <taxon>Prochlorococcaceae</taxon>
        <taxon>Prochlorococcus</taxon>
    </lineage>
</organism>
<feature type="chain" id="PRO_0000136660" description="Tryptophan--tRNA ligase">
    <location>
        <begin position="1"/>
        <end position="337"/>
    </location>
</feature>
<feature type="short sequence motif" description="'HIGH' region" evidence="1">
    <location>
        <begin position="12"/>
        <end position="20"/>
    </location>
</feature>
<feature type="short sequence motif" description="'KMSKS' region" evidence="1">
    <location>
        <begin position="200"/>
        <end position="204"/>
    </location>
</feature>
<feature type="binding site" evidence="1">
    <location>
        <begin position="11"/>
        <end position="13"/>
    </location>
    <ligand>
        <name>ATP</name>
        <dbReference type="ChEBI" id="CHEBI:30616"/>
    </ligand>
</feature>
<feature type="binding site" evidence="1">
    <location>
        <begin position="19"/>
        <end position="20"/>
    </location>
    <ligand>
        <name>ATP</name>
        <dbReference type="ChEBI" id="CHEBI:30616"/>
    </ligand>
</feature>
<feature type="binding site" evidence="1">
    <location>
        <position position="135"/>
    </location>
    <ligand>
        <name>L-tryptophan</name>
        <dbReference type="ChEBI" id="CHEBI:57912"/>
    </ligand>
</feature>
<feature type="binding site" evidence="1">
    <location>
        <begin position="147"/>
        <end position="149"/>
    </location>
    <ligand>
        <name>ATP</name>
        <dbReference type="ChEBI" id="CHEBI:30616"/>
    </ligand>
</feature>
<feature type="binding site" evidence="1">
    <location>
        <position position="191"/>
    </location>
    <ligand>
        <name>ATP</name>
        <dbReference type="ChEBI" id="CHEBI:30616"/>
    </ligand>
</feature>
<feature type="binding site" evidence="1">
    <location>
        <begin position="200"/>
        <end position="204"/>
    </location>
    <ligand>
        <name>ATP</name>
        <dbReference type="ChEBI" id="CHEBI:30616"/>
    </ligand>
</feature>
<comment type="function">
    <text evidence="1">Catalyzes the attachment of tryptophan to tRNA(Trp).</text>
</comment>
<comment type="catalytic activity">
    <reaction evidence="1">
        <text>tRNA(Trp) + L-tryptophan + ATP = L-tryptophyl-tRNA(Trp) + AMP + diphosphate + H(+)</text>
        <dbReference type="Rhea" id="RHEA:24080"/>
        <dbReference type="Rhea" id="RHEA-COMP:9671"/>
        <dbReference type="Rhea" id="RHEA-COMP:9705"/>
        <dbReference type="ChEBI" id="CHEBI:15378"/>
        <dbReference type="ChEBI" id="CHEBI:30616"/>
        <dbReference type="ChEBI" id="CHEBI:33019"/>
        <dbReference type="ChEBI" id="CHEBI:57912"/>
        <dbReference type="ChEBI" id="CHEBI:78442"/>
        <dbReference type="ChEBI" id="CHEBI:78535"/>
        <dbReference type="ChEBI" id="CHEBI:456215"/>
        <dbReference type="EC" id="6.1.1.2"/>
    </reaction>
</comment>
<comment type="subunit">
    <text evidence="1">Homodimer.</text>
</comment>
<comment type="subcellular location">
    <subcellularLocation>
        <location evidence="1">Cytoplasm</location>
    </subcellularLocation>
</comment>
<comment type="similarity">
    <text evidence="1">Belongs to the class-I aminoacyl-tRNA synthetase family.</text>
</comment>
<evidence type="ECO:0000255" key="1">
    <source>
        <dbReference type="HAMAP-Rule" id="MF_00140"/>
    </source>
</evidence>
<name>SYW_PROMM</name>
<dbReference type="EC" id="6.1.1.2" evidence="1"/>
<dbReference type="EMBL" id="BX548175">
    <property type="protein sequence ID" value="CAE20597.1"/>
    <property type="molecule type" value="Genomic_DNA"/>
</dbReference>
<dbReference type="RefSeq" id="WP_011129801.1">
    <property type="nucleotide sequence ID" value="NC_005071.1"/>
</dbReference>
<dbReference type="SMR" id="Q7TV34"/>
<dbReference type="KEGG" id="pmt:PMT_0422"/>
<dbReference type="eggNOG" id="COG0180">
    <property type="taxonomic scope" value="Bacteria"/>
</dbReference>
<dbReference type="HOGENOM" id="CLU_029244_1_4_3"/>
<dbReference type="OrthoDB" id="9801042at2"/>
<dbReference type="Proteomes" id="UP000001423">
    <property type="component" value="Chromosome"/>
</dbReference>
<dbReference type="GO" id="GO:0005737">
    <property type="term" value="C:cytoplasm"/>
    <property type="evidence" value="ECO:0007669"/>
    <property type="project" value="UniProtKB-SubCell"/>
</dbReference>
<dbReference type="GO" id="GO:0005524">
    <property type="term" value="F:ATP binding"/>
    <property type="evidence" value="ECO:0007669"/>
    <property type="project" value="UniProtKB-UniRule"/>
</dbReference>
<dbReference type="GO" id="GO:0004830">
    <property type="term" value="F:tryptophan-tRNA ligase activity"/>
    <property type="evidence" value="ECO:0007669"/>
    <property type="project" value="UniProtKB-UniRule"/>
</dbReference>
<dbReference type="GO" id="GO:0006436">
    <property type="term" value="P:tryptophanyl-tRNA aminoacylation"/>
    <property type="evidence" value="ECO:0007669"/>
    <property type="project" value="UniProtKB-UniRule"/>
</dbReference>
<dbReference type="CDD" id="cd00806">
    <property type="entry name" value="TrpRS_core"/>
    <property type="match status" value="1"/>
</dbReference>
<dbReference type="FunFam" id="1.10.240.10:FF:000002">
    <property type="entry name" value="Tryptophan--tRNA ligase"/>
    <property type="match status" value="1"/>
</dbReference>
<dbReference type="Gene3D" id="3.40.50.620">
    <property type="entry name" value="HUPs"/>
    <property type="match status" value="1"/>
</dbReference>
<dbReference type="Gene3D" id="1.10.240.10">
    <property type="entry name" value="Tyrosyl-Transfer RNA Synthetase"/>
    <property type="match status" value="1"/>
</dbReference>
<dbReference type="HAMAP" id="MF_00140_B">
    <property type="entry name" value="Trp_tRNA_synth_B"/>
    <property type="match status" value="1"/>
</dbReference>
<dbReference type="InterPro" id="IPR002305">
    <property type="entry name" value="aa-tRNA-synth_Ic"/>
</dbReference>
<dbReference type="InterPro" id="IPR014729">
    <property type="entry name" value="Rossmann-like_a/b/a_fold"/>
</dbReference>
<dbReference type="InterPro" id="IPR002306">
    <property type="entry name" value="Trp-tRNA-ligase"/>
</dbReference>
<dbReference type="InterPro" id="IPR024109">
    <property type="entry name" value="Trp-tRNA-ligase_bac-type"/>
</dbReference>
<dbReference type="InterPro" id="IPR050203">
    <property type="entry name" value="Trp-tRNA_synthetase"/>
</dbReference>
<dbReference type="NCBIfam" id="TIGR00233">
    <property type="entry name" value="trpS"/>
    <property type="match status" value="1"/>
</dbReference>
<dbReference type="PANTHER" id="PTHR43766">
    <property type="entry name" value="TRYPTOPHAN--TRNA LIGASE, MITOCHONDRIAL"/>
    <property type="match status" value="1"/>
</dbReference>
<dbReference type="PANTHER" id="PTHR43766:SF1">
    <property type="entry name" value="TRYPTOPHAN--TRNA LIGASE, MITOCHONDRIAL"/>
    <property type="match status" value="1"/>
</dbReference>
<dbReference type="Pfam" id="PF00579">
    <property type="entry name" value="tRNA-synt_1b"/>
    <property type="match status" value="1"/>
</dbReference>
<dbReference type="PRINTS" id="PR01039">
    <property type="entry name" value="TRNASYNTHTRP"/>
</dbReference>
<dbReference type="SUPFAM" id="SSF52374">
    <property type="entry name" value="Nucleotidylyl transferase"/>
    <property type="match status" value="1"/>
</dbReference>
<sequence length="337" mass="37323">MQRPRVLSGVQPTGALHLGNWLGAIRNWVDLQSSHDTYVCVVDLHAITVPHDPERLAEESLSTAALYLACGMDPDLCSIFVQSQVSAHSELCWLLNCVTPLNWLERMIQFKEKSVKQGDNVSVGLLDYPVLMAADILLYDADLVPVGEDQKQHLELARDIAQQRINARFGSEEKPVLKVPDPLIIKEGARVMSLSDGRSKMSKSDPNEGSRITLLDPPELITKKIKRAKTDPQMGLQFGNPDRPEADNLLGIYAILSGRGRDAAAQECAEMGWGTFKPLLADATVSALEPIQHRYQQLMGDRIELIRVLDQGRTRAEETAQATLQRVRQALGFLIAS</sequence>
<proteinExistence type="inferred from homology"/>
<keyword id="KW-0030">Aminoacyl-tRNA synthetase</keyword>
<keyword id="KW-0067">ATP-binding</keyword>
<keyword id="KW-0963">Cytoplasm</keyword>
<keyword id="KW-0436">Ligase</keyword>
<keyword id="KW-0547">Nucleotide-binding</keyword>
<keyword id="KW-0648">Protein biosynthesis</keyword>
<keyword id="KW-1185">Reference proteome</keyword>
<gene>
    <name evidence="1" type="primary">trpS</name>
    <name type="ordered locus">PMT_0422</name>
</gene>
<protein>
    <recommendedName>
        <fullName evidence="1">Tryptophan--tRNA ligase</fullName>
        <ecNumber evidence="1">6.1.1.2</ecNumber>
    </recommendedName>
    <alternativeName>
        <fullName evidence="1">Tryptophanyl-tRNA synthetase</fullName>
        <shortName evidence="1">TrpRS</shortName>
    </alternativeName>
</protein>